<name>PGLRD_ASPNG</name>
<feature type="signal peptide" evidence="2">
    <location>
        <begin position="1"/>
        <end position="16"/>
    </location>
</feature>
<feature type="chain" id="PRO_5000147353" description="Endopolygalacturonase D">
    <location>
        <begin position="17"/>
        <end position="495"/>
    </location>
</feature>
<feature type="repeat" description="PbH1 1">
    <location>
        <begin position="261"/>
        <end position="283"/>
    </location>
</feature>
<feature type="repeat" description="PbH1 2">
    <location>
        <begin position="284"/>
        <end position="322"/>
    </location>
</feature>
<feature type="repeat" description="PbH1 3">
    <location>
        <begin position="323"/>
        <end position="344"/>
    </location>
</feature>
<feature type="repeat" description="PbH1 4">
    <location>
        <begin position="374"/>
        <end position="395"/>
    </location>
</feature>
<feature type="repeat" description="PbH1 5">
    <location>
        <begin position="403"/>
        <end position="425"/>
    </location>
</feature>
<feature type="repeat" description="PbH1 6">
    <location>
        <begin position="469"/>
        <end position="492"/>
    </location>
</feature>
<feature type="active site" description="Proton donor" evidence="3">
    <location>
        <position position="337"/>
    </location>
</feature>
<feature type="active site" evidence="3">
    <location>
        <position position="359"/>
    </location>
</feature>
<feature type="glycosylation site" description="N-linked (GlcNAc...) asparagine" evidence="2">
    <location>
        <position position="295"/>
    </location>
</feature>
<feature type="glycosylation site" description="N-linked (GlcNAc...) asparagine" evidence="2">
    <location>
        <position position="371"/>
    </location>
</feature>
<feature type="glycosylation site" description="N-linked (GlcNAc...) asparagine" evidence="2">
    <location>
        <position position="410"/>
    </location>
</feature>
<feature type="glycosylation site" description="N-linked (GlcNAc...) asparagine" evidence="2">
    <location>
        <position position="444"/>
    </location>
</feature>
<feature type="disulfide bond" evidence="1">
    <location>
        <begin position="154"/>
        <end position="169"/>
    </location>
</feature>
<feature type="disulfide bond" evidence="1">
    <location>
        <begin position="339"/>
        <end position="355"/>
    </location>
</feature>
<feature type="disulfide bond" evidence="1">
    <location>
        <begin position="464"/>
        <end position="469"/>
    </location>
</feature>
<feature type="disulfide bond" evidence="1">
    <location>
        <begin position="487"/>
        <end position="494"/>
    </location>
</feature>
<accession>Q9P4W2</accession>
<sequence length="495" mass="50783">MKRSALLASFLPLALGCDSAETHSCASAFSVSSAAAASFCATFTASTVTATTGVPDVFLSNCDYKTKHLSSACSCLGTADGSAPASTPAAPAVSSSSKVGKAPAVAATRTSAIPTTFHTTAVRVPLSTSAAAAVTSQAVLPAQSSVAGNGGTTCTVTEYASISSAVASCSNILLSNINAPASSTIDLTGLQTGAAVIFAGETTFGDTYDSDFDPIVISGTDVTITGEEGHVINGNGEAYWDGEGSNGGQDKPDHFIVVKDMYNSKIENLNILNWPVHCFEIENTEYLTISGLILNNTAGDAANSKSDGDPAAHNTDGFDIKQSDFLTLSNSWVHNQDDCVAVTSGSSIVVDNLYCYGGHGLSIGSIGGKSNNTVDGVTFSNSQVINSENGCRIKSNADTTGEVYNVKYENITLSGISDYGIDIQQDYENGGATGDPTNGVKIENISFVNVKGTMSDGKDYYILCGDGSCSNFVFTDVDITGGSDDSCNYPSSGCP</sequence>
<proteinExistence type="inferred from homology"/>
<dbReference type="EC" id="3.2.1.15"/>
<dbReference type="EMBL" id="Y18806">
    <property type="protein sequence ID" value="CAB72931.1"/>
    <property type="molecule type" value="Genomic_DNA"/>
</dbReference>
<dbReference type="RefSeq" id="XP_059601375.1">
    <property type="nucleotide sequence ID" value="XM_059749709.1"/>
</dbReference>
<dbReference type="SMR" id="Q9P4W2"/>
<dbReference type="CAZy" id="GH28">
    <property type="family name" value="Glycoside Hydrolase Family 28"/>
</dbReference>
<dbReference type="GlyCosmos" id="Q9P4W2">
    <property type="glycosylation" value="4 sites, No reported glycans"/>
</dbReference>
<dbReference type="PaxDb" id="5061-CADANGAP00007721"/>
<dbReference type="EnsemblFungi" id="CAK40265">
    <property type="protein sequence ID" value="CAK40265"/>
    <property type="gene ID" value="An09g03260"/>
</dbReference>
<dbReference type="GeneID" id="4983861"/>
<dbReference type="VEuPathDB" id="FungiDB:An09g03260"/>
<dbReference type="VEuPathDB" id="FungiDB:ASPNIDRAFT2_1180726"/>
<dbReference type="VEuPathDB" id="FungiDB:ATCC64974_10360"/>
<dbReference type="VEuPathDB" id="FungiDB:M747DRAFT_306785"/>
<dbReference type="eggNOG" id="ENOG502QW1P">
    <property type="taxonomic scope" value="Eukaryota"/>
</dbReference>
<dbReference type="BioCyc" id="MetaCyc:MONOMER-20557"/>
<dbReference type="BRENDA" id="3.2.1.15">
    <property type="organism ID" value="518"/>
</dbReference>
<dbReference type="GO" id="GO:0005576">
    <property type="term" value="C:extracellular region"/>
    <property type="evidence" value="ECO:0000250"/>
    <property type="project" value="UniProtKB"/>
</dbReference>
<dbReference type="GO" id="GO:0004650">
    <property type="term" value="F:polygalacturonase activity"/>
    <property type="evidence" value="ECO:0000250"/>
    <property type="project" value="UniProtKB"/>
</dbReference>
<dbReference type="GO" id="GO:0071555">
    <property type="term" value="P:cell wall organization"/>
    <property type="evidence" value="ECO:0007669"/>
    <property type="project" value="UniProtKB-KW"/>
</dbReference>
<dbReference type="GO" id="GO:0045490">
    <property type="term" value="P:pectin catabolic process"/>
    <property type="evidence" value="ECO:0000250"/>
    <property type="project" value="UniProtKB"/>
</dbReference>
<dbReference type="FunFam" id="2.160.20.10:FF:000002">
    <property type="entry name" value="Endopolygalacturonase D"/>
    <property type="match status" value="1"/>
</dbReference>
<dbReference type="Gene3D" id="2.160.20.10">
    <property type="entry name" value="Single-stranded right-handed beta-helix, Pectin lyase-like"/>
    <property type="match status" value="1"/>
</dbReference>
<dbReference type="InterPro" id="IPR000743">
    <property type="entry name" value="Glyco_hydro_28"/>
</dbReference>
<dbReference type="InterPro" id="IPR050434">
    <property type="entry name" value="Glycosyl_hydrlase_28"/>
</dbReference>
<dbReference type="InterPro" id="IPR006626">
    <property type="entry name" value="PbH1"/>
</dbReference>
<dbReference type="InterPro" id="IPR012334">
    <property type="entry name" value="Pectin_lyas_fold"/>
</dbReference>
<dbReference type="InterPro" id="IPR011050">
    <property type="entry name" value="Pectin_lyase_fold/virulence"/>
</dbReference>
<dbReference type="PANTHER" id="PTHR31884:SF9">
    <property type="entry name" value="ENDOPOLYGALACTURONASE D-RELATED"/>
    <property type="match status" value="1"/>
</dbReference>
<dbReference type="PANTHER" id="PTHR31884">
    <property type="entry name" value="POLYGALACTURONASE"/>
    <property type="match status" value="1"/>
</dbReference>
<dbReference type="Pfam" id="PF00295">
    <property type="entry name" value="Glyco_hydro_28"/>
    <property type="match status" value="1"/>
</dbReference>
<dbReference type="SMART" id="SM00710">
    <property type="entry name" value="PbH1"/>
    <property type="match status" value="6"/>
</dbReference>
<dbReference type="SUPFAM" id="SSF51126">
    <property type="entry name" value="Pectin lyase-like"/>
    <property type="match status" value="1"/>
</dbReference>
<dbReference type="PROSITE" id="PS00502">
    <property type="entry name" value="POLYGALACTURONASE"/>
    <property type="match status" value="1"/>
</dbReference>
<gene>
    <name type="primary">pgaD</name>
</gene>
<reference key="1">
    <citation type="journal article" date="2000" name="FEBS Lett.">
        <title>Characterization of a novel endopolygalacturonase from Aspergillus niger with unique kinetic properties.</title>
        <authorList>
            <person name="Parenicova L."/>
            <person name="Kester H.C."/>
            <person name="Benen J.A."/>
            <person name="Visser J."/>
        </authorList>
    </citation>
    <scope>NUCLEOTIDE SEQUENCE [GENOMIC DNA]</scope>
    <scope>FUNCTION</scope>
    <source>
        <strain>ATCC 9029 / NRRL 3 / CBS 120.49 / DSM 2466 / N400 / FGSC 732</strain>
    </source>
</reference>
<evidence type="ECO:0000250" key="1"/>
<evidence type="ECO:0000255" key="2"/>
<evidence type="ECO:0000255" key="3">
    <source>
        <dbReference type="PROSITE-ProRule" id="PRU10052"/>
    </source>
</evidence>
<evidence type="ECO:0000269" key="4">
    <source>
    </source>
</evidence>
<evidence type="ECO:0000305" key="5"/>
<protein>
    <recommendedName>
        <fullName>Endopolygalacturonase D</fullName>
        <shortName>PGD</shortName>
        <ecNumber>3.2.1.15</ecNumber>
    </recommendedName>
    <alternativeName>
        <fullName>Pectinase D</fullName>
    </alternativeName>
    <alternativeName>
        <fullName>Polygalacturonase D</fullName>
    </alternativeName>
</protein>
<comment type="function">
    <text evidence="4">Involved in maceration and soft-rotting of plant tissue. Hydrolyzes the 1,4-alpha glycosidic bonds of de-esterified pectate in the smooth region of the plant cell wall.</text>
</comment>
<comment type="catalytic activity">
    <reaction>
        <text>(1,4-alpha-D-galacturonosyl)n+m + H2O = (1,4-alpha-D-galacturonosyl)n + (1,4-alpha-D-galacturonosyl)m.</text>
        <dbReference type="EC" id="3.2.1.15"/>
    </reaction>
</comment>
<comment type="subcellular location">
    <subcellularLocation>
        <location evidence="5">Secreted</location>
    </subcellularLocation>
</comment>
<comment type="similarity">
    <text evidence="5">Belongs to the glycosyl hydrolase 28 family.</text>
</comment>
<organism>
    <name type="scientific">Aspergillus niger</name>
    <dbReference type="NCBI Taxonomy" id="5061"/>
    <lineage>
        <taxon>Eukaryota</taxon>
        <taxon>Fungi</taxon>
        <taxon>Dikarya</taxon>
        <taxon>Ascomycota</taxon>
        <taxon>Pezizomycotina</taxon>
        <taxon>Eurotiomycetes</taxon>
        <taxon>Eurotiomycetidae</taxon>
        <taxon>Eurotiales</taxon>
        <taxon>Aspergillaceae</taxon>
        <taxon>Aspergillus</taxon>
        <taxon>Aspergillus subgen. Circumdati</taxon>
    </lineage>
</organism>
<keyword id="KW-0961">Cell wall biogenesis/degradation</keyword>
<keyword id="KW-1015">Disulfide bond</keyword>
<keyword id="KW-0325">Glycoprotein</keyword>
<keyword id="KW-0326">Glycosidase</keyword>
<keyword id="KW-0378">Hydrolase</keyword>
<keyword id="KW-0677">Repeat</keyword>
<keyword id="KW-0964">Secreted</keyword>
<keyword id="KW-0732">Signal</keyword>